<organism>
    <name type="scientific">Salmonella typhi</name>
    <dbReference type="NCBI Taxonomy" id="90370"/>
    <lineage>
        <taxon>Bacteria</taxon>
        <taxon>Pseudomonadati</taxon>
        <taxon>Pseudomonadota</taxon>
        <taxon>Gammaproteobacteria</taxon>
        <taxon>Enterobacterales</taxon>
        <taxon>Enterobacteriaceae</taxon>
        <taxon>Salmonella</taxon>
    </lineage>
</organism>
<gene>
    <name evidence="2" type="primary">pdxJ</name>
    <name type="ordered locus">STY2824</name>
    <name type="ordered locus">t0279</name>
</gene>
<reference key="1">
    <citation type="journal article" date="2001" name="Nature">
        <title>Complete genome sequence of a multiple drug resistant Salmonella enterica serovar Typhi CT18.</title>
        <authorList>
            <person name="Parkhill J."/>
            <person name="Dougan G."/>
            <person name="James K.D."/>
            <person name="Thomson N.R."/>
            <person name="Pickard D."/>
            <person name="Wain J."/>
            <person name="Churcher C.M."/>
            <person name="Mungall K.L."/>
            <person name="Bentley S.D."/>
            <person name="Holden M.T.G."/>
            <person name="Sebaihia M."/>
            <person name="Baker S."/>
            <person name="Basham D."/>
            <person name="Brooks K."/>
            <person name="Chillingworth T."/>
            <person name="Connerton P."/>
            <person name="Cronin A."/>
            <person name="Davis P."/>
            <person name="Davies R.M."/>
            <person name="Dowd L."/>
            <person name="White N."/>
            <person name="Farrar J."/>
            <person name="Feltwell T."/>
            <person name="Hamlin N."/>
            <person name="Haque A."/>
            <person name="Hien T.T."/>
            <person name="Holroyd S."/>
            <person name="Jagels K."/>
            <person name="Krogh A."/>
            <person name="Larsen T.S."/>
            <person name="Leather S."/>
            <person name="Moule S."/>
            <person name="O'Gaora P."/>
            <person name="Parry C."/>
            <person name="Quail M.A."/>
            <person name="Rutherford K.M."/>
            <person name="Simmonds M."/>
            <person name="Skelton J."/>
            <person name="Stevens K."/>
            <person name="Whitehead S."/>
            <person name="Barrell B.G."/>
        </authorList>
    </citation>
    <scope>NUCLEOTIDE SEQUENCE [LARGE SCALE GENOMIC DNA]</scope>
    <source>
        <strain>CT18</strain>
    </source>
</reference>
<reference key="2">
    <citation type="journal article" date="2003" name="J. Bacteriol.">
        <title>Comparative genomics of Salmonella enterica serovar Typhi strains Ty2 and CT18.</title>
        <authorList>
            <person name="Deng W."/>
            <person name="Liou S.-R."/>
            <person name="Plunkett G. III"/>
            <person name="Mayhew G.F."/>
            <person name="Rose D.J."/>
            <person name="Burland V."/>
            <person name="Kodoyianni V."/>
            <person name="Schwartz D.C."/>
            <person name="Blattner F.R."/>
        </authorList>
    </citation>
    <scope>NUCLEOTIDE SEQUENCE [LARGE SCALE GENOMIC DNA]</scope>
    <source>
        <strain>ATCC 700931 / Ty2</strain>
    </source>
</reference>
<evidence type="ECO:0000250" key="1"/>
<evidence type="ECO:0000255" key="2">
    <source>
        <dbReference type="HAMAP-Rule" id="MF_00279"/>
    </source>
</evidence>
<protein>
    <recommendedName>
        <fullName evidence="2">Pyridoxine 5'-phosphate synthase</fullName>
        <shortName evidence="2">PNP synthase</shortName>
        <ecNumber evidence="2">2.6.99.2</ecNumber>
    </recommendedName>
</protein>
<feature type="initiator methionine" description="Removed" evidence="1">
    <location>
        <position position="1"/>
    </location>
</feature>
<feature type="chain" id="PRO_0000190129" description="Pyridoxine 5'-phosphate synthase">
    <location>
        <begin position="2"/>
        <end position="243"/>
    </location>
</feature>
<feature type="active site" description="Proton acceptor" evidence="2">
    <location>
        <position position="45"/>
    </location>
</feature>
<feature type="active site" description="Proton acceptor" evidence="2">
    <location>
        <position position="72"/>
    </location>
</feature>
<feature type="active site" description="Proton donor" evidence="2">
    <location>
        <position position="193"/>
    </location>
</feature>
<feature type="binding site" evidence="2">
    <location>
        <position position="9"/>
    </location>
    <ligand>
        <name>3-amino-2-oxopropyl phosphate</name>
        <dbReference type="ChEBI" id="CHEBI:57279"/>
    </ligand>
</feature>
<feature type="binding site" evidence="2">
    <location>
        <begin position="11"/>
        <end position="12"/>
    </location>
    <ligand>
        <name>1-deoxy-D-xylulose 5-phosphate</name>
        <dbReference type="ChEBI" id="CHEBI:57792"/>
    </ligand>
</feature>
<feature type="binding site" evidence="2">
    <location>
        <position position="20"/>
    </location>
    <ligand>
        <name>3-amino-2-oxopropyl phosphate</name>
        <dbReference type="ChEBI" id="CHEBI:57279"/>
    </ligand>
</feature>
<feature type="binding site" evidence="2">
    <location>
        <position position="47"/>
    </location>
    <ligand>
        <name>1-deoxy-D-xylulose 5-phosphate</name>
        <dbReference type="ChEBI" id="CHEBI:57792"/>
    </ligand>
</feature>
<feature type="binding site" evidence="2">
    <location>
        <position position="52"/>
    </location>
    <ligand>
        <name>1-deoxy-D-xylulose 5-phosphate</name>
        <dbReference type="ChEBI" id="CHEBI:57792"/>
    </ligand>
</feature>
<feature type="binding site" evidence="2">
    <location>
        <position position="102"/>
    </location>
    <ligand>
        <name>1-deoxy-D-xylulose 5-phosphate</name>
        <dbReference type="ChEBI" id="CHEBI:57792"/>
    </ligand>
</feature>
<feature type="binding site" evidence="2">
    <location>
        <position position="194"/>
    </location>
    <ligand>
        <name>3-amino-2-oxopropyl phosphate</name>
        <dbReference type="ChEBI" id="CHEBI:57279"/>
    </ligand>
</feature>
<feature type="binding site" evidence="2">
    <location>
        <begin position="215"/>
        <end position="216"/>
    </location>
    <ligand>
        <name>3-amino-2-oxopropyl phosphate</name>
        <dbReference type="ChEBI" id="CHEBI:57279"/>
    </ligand>
</feature>
<feature type="site" description="Transition state stabilizer" evidence="2">
    <location>
        <position position="153"/>
    </location>
</feature>
<keyword id="KW-0963">Cytoplasm</keyword>
<keyword id="KW-0664">Pyridoxine biosynthesis</keyword>
<keyword id="KW-0808">Transferase</keyword>
<proteinExistence type="inferred from homology"/>
<accession>Q8Z4K6</accession>
<name>PDXJ_SALTI</name>
<comment type="function">
    <text evidence="2">Catalyzes the complicated ring closure reaction between the two acyclic compounds 1-deoxy-D-xylulose-5-phosphate (DXP) and 3-amino-2-oxopropyl phosphate (1-amino-acetone-3-phosphate or AAP) to form pyridoxine 5'-phosphate (PNP) and inorganic phosphate.</text>
</comment>
<comment type="catalytic activity">
    <reaction evidence="2">
        <text>3-amino-2-oxopropyl phosphate + 1-deoxy-D-xylulose 5-phosphate = pyridoxine 5'-phosphate + phosphate + 2 H2O + H(+)</text>
        <dbReference type="Rhea" id="RHEA:15265"/>
        <dbReference type="ChEBI" id="CHEBI:15377"/>
        <dbReference type="ChEBI" id="CHEBI:15378"/>
        <dbReference type="ChEBI" id="CHEBI:43474"/>
        <dbReference type="ChEBI" id="CHEBI:57279"/>
        <dbReference type="ChEBI" id="CHEBI:57792"/>
        <dbReference type="ChEBI" id="CHEBI:58589"/>
        <dbReference type="EC" id="2.6.99.2"/>
    </reaction>
</comment>
<comment type="pathway">
    <text evidence="2">Cofactor biosynthesis; pyridoxine 5'-phosphate biosynthesis; pyridoxine 5'-phosphate from D-erythrose 4-phosphate: step 5/5.</text>
</comment>
<comment type="subunit">
    <text evidence="2">Homooctamer; tetramer of dimers.</text>
</comment>
<comment type="subcellular location">
    <subcellularLocation>
        <location evidence="2">Cytoplasm</location>
    </subcellularLocation>
</comment>
<comment type="similarity">
    <text evidence="2">Belongs to the PNP synthase family.</text>
</comment>
<sequence length="243" mass="26398">MAELLLGVNIDHIATLRNARGTDYPDPVQAAFIAEQAGADGITVHLREDRRHITDRDVRILRQTLHTRMNLEMAVTEEMLAIAVETRPHFCCLVPEKRQEVTTEGGLDVAGQRDKMRDACARLAAAGIQVSLFIDADERQINAAAEVGAPFIEIHTGCYANAETDAEQAKELARIASAATLAARLGLKVNAGHGLTYHNVKAIAALPEMHELNIGHAIIGRAVMTGLKEAVAEMKRLMLEARG</sequence>
<dbReference type="EC" id="2.6.99.2" evidence="2"/>
<dbReference type="EMBL" id="AL513382">
    <property type="protein sequence ID" value="CAD02780.1"/>
    <property type="molecule type" value="Genomic_DNA"/>
</dbReference>
<dbReference type="EMBL" id="AE014613">
    <property type="protein sequence ID" value="AAO68004.1"/>
    <property type="molecule type" value="Genomic_DNA"/>
</dbReference>
<dbReference type="RefSeq" id="NP_457107.1">
    <property type="nucleotide sequence ID" value="NC_003198.1"/>
</dbReference>
<dbReference type="RefSeq" id="WP_000818969.1">
    <property type="nucleotide sequence ID" value="NZ_WSUR01000007.1"/>
</dbReference>
<dbReference type="SMR" id="Q8Z4K6"/>
<dbReference type="STRING" id="220341.gene:17586714"/>
<dbReference type="KEGG" id="stt:t0279"/>
<dbReference type="KEGG" id="sty:STY2824"/>
<dbReference type="PATRIC" id="fig|220341.7.peg.2872"/>
<dbReference type="eggNOG" id="COG0854">
    <property type="taxonomic scope" value="Bacteria"/>
</dbReference>
<dbReference type="HOGENOM" id="CLU_074563_0_0_6"/>
<dbReference type="OMA" id="ERHIRYQ"/>
<dbReference type="OrthoDB" id="9806590at2"/>
<dbReference type="UniPathway" id="UPA00244">
    <property type="reaction ID" value="UER00313"/>
</dbReference>
<dbReference type="Proteomes" id="UP000000541">
    <property type="component" value="Chromosome"/>
</dbReference>
<dbReference type="Proteomes" id="UP000002670">
    <property type="component" value="Chromosome"/>
</dbReference>
<dbReference type="GO" id="GO:0005829">
    <property type="term" value="C:cytosol"/>
    <property type="evidence" value="ECO:0007669"/>
    <property type="project" value="TreeGrafter"/>
</dbReference>
<dbReference type="GO" id="GO:0033856">
    <property type="term" value="F:pyridoxine 5'-phosphate synthase activity"/>
    <property type="evidence" value="ECO:0007669"/>
    <property type="project" value="UniProtKB-EC"/>
</dbReference>
<dbReference type="GO" id="GO:0008615">
    <property type="term" value="P:pyridoxine biosynthetic process"/>
    <property type="evidence" value="ECO:0007669"/>
    <property type="project" value="UniProtKB-UniRule"/>
</dbReference>
<dbReference type="CDD" id="cd00003">
    <property type="entry name" value="PNPsynthase"/>
    <property type="match status" value="1"/>
</dbReference>
<dbReference type="FunFam" id="3.20.20.70:FF:000042">
    <property type="entry name" value="Pyridoxine 5'-phosphate synthase"/>
    <property type="match status" value="1"/>
</dbReference>
<dbReference type="Gene3D" id="3.20.20.70">
    <property type="entry name" value="Aldolase class I"/>
    <property type="match status" value="1"/>
</dbReference>
<dbReference type="HAMAP" id="MF_00279">
    <property type="entry name" value="PdxJ"/>
    <property type="match status" value="1"/>
</dbReference>
<dbReference type="InterPro" id="IPR013785">
    <property type="entry name" value="Aldolase_TIM"/>
</dbReference>
<dbReference type="InterPro" id="IPR004569">
    <property type="entry name" value="PyrdxlP_synth_PdxJ"/>
</dbReference>
<dbReference type="InterPro" id="IPR036130">
    <property type="entry name" value="Pyridoxine-5'_phos_synth"/>
</dbReference>
<dbReference type="NCBIfam" id="TIGR00559">
    <property type="entry name" value="pdxJ"/>
    <property type="match status" value="1"/>
</dbReference>
<dbReference type="NCBIfam" id="NF003623">
    <property type="entry name" value="PRK05265.1-1"/>
    <property type="match status" value="1"/>
</dbReference>
<dbReference type="NCBIfam" id="NF003624">
    <property type="entry name" value="PRK05265.1-2"/>
    <property type="match status" value="1"/>
</dbReference>
<dbReference type="NCBIfam" id="NF003625">
    <property type="entry name" value="PRK05265.1-3"/>
    <property type="match status" value="1"/>
</dbReference>
<dbReference type="NCBIfam" id="NF003626">
    <property type="entry name" value="PRK05265.1-4"/>
    <property type="match status" value="1"/>
</dbReference>
<dbReference type="NCBIfam" id="NF003627">
    <property type="entry name" value="PRK05265.1-5"/>
    <property type="match status" value="1"/>
</dbReference>
<dbReference type="PANTHER" id="PTHR30456">
    <property type="entry name" value="PYRIDOXINE 5'-PHOSPHATE SYNTHASE"/>
    <property type="match status" value="1"/>
</dbReference>
<dbReference type="PANTHER" id="PTHR30456:SF0">
    <property type="entry name" value="PYRIDOXINE 5'-PHOSPHATE SYNTHASE"/>
    <property type="match status" value="1"/>
</dbReference>
<dbReference type="Pfam" id="PF03740">
    <property type="entry name" value="PdxJ"/>
    <property type="match status" value="1"/>
</dbReference>
<dbReference type="SUPFAM" id="SSF63892">
    <property type="entry name" value="Pyridoxine 5'-phosphate synthase"/>
    <property type="match status" value="1"/>
</dbReference>